<feature type="chain" id="PRO_0000281135" description="Dynein axonemal light chain 1">
    <location>
        <begin position="1"/>
        <end position="190"/>
    </location>
</feature>
<feature type="repeat" description="LRR 1">
    <location>
        <begin position="49"/>
        <end position="70"/>
    </location>
</feature>
<feature type="repeat" description="LRR 2">
    <location>
        <begin position="71"/>
        <end position="92"/>
    </location>
</feature>
<feature type="repeat" description="LRR 3">
    <location>
        <begin position="94"/>
        <end position="115"/>
    </location>
</feature>
<feature type="repeat" description="LRR 4">
    <location>
        <begin position="116"/>
        <end position="137"/>
    </location>
</feature>
<feature type="domain" description="LRRCT">
    <location>
        <begin position="150"/>
        <end position="190"/>
    </location>
</feature>
<accession>Q8T888</accession>
<reference key="1">
    <citation type="journal article" date="2003" name="Mol. Biol. Cell">
        <title>Identification of a novel leucine-rich repeat protein as a component of flagellar radial spoke in the Ascidian Ciona intestinalis.</title>
        <authorList>
            <person name="Padma P."/>
            <person name="Satouh Y."/>
            <person name="Wakabayashi K."/>
            <person name="Hozumi A."/>
            <person name="Ushimaru Y."/>
            <person name="Kamiya R."/>
            <person name="Inaba K."/>
        </authorList>
    </citation>
    <scope>NUCLEOTIDE SEQUENCE [MRNA]</scope>
    <source>
        <tissue>Testis</tissue>
    </source>
</reference>
<dbReference type="EMBL" id="AB080948">
    <property type="protein sequence ID" value="BAB85851.1"/>
    <property type="molecule type" value="mRNA"/>
</dbReference>
<dbReference type="RefSeq" id="NP_001027642.1">
    <property type="nucleotide sequence ID" value="NM_001032470.1"/>
</dbReference>
<dbReference type="SMR" id="Q8T888"/>
<dbReference type="FunCoup" id="Q8T888">
    <property type="interactions" value="21"/>
</dbReference>
<dbReference type="STRING" id="7719.ENSCINP00000011761"/>
<dbReference type="Ensembl" id="ENSCINT00000011761.3">
    <property type="protein sequence ID" value="ENSCINP00000011761.3"/>
    <property type="gene ID" value="ENSCING00000005688.3"/>
</dbReference>
<dbReference type="GeneID" id="445644"/>
<dbReference type="KEGG" id="cin:445644"/>
<dbReference type="CTD" id="83544"/>
<dbReference type="eggNOG" id="KOG0531">
    <property type="taxonomic scope" value="Eukaryota"/>
</dbReference>
<dbReference type="GeneTree" id="ENSGT00390000016904"/>
<dbReference type="HOGENOM" id="CLU_092189_0_0_1"/>
<dbReference type="InParanoid" id="Q8T888"/>
<dbReference type="OMA" id="NCERISM"/>
<dbReference type="OrthoDB" id="266138at2759"/>
<dbReference type="TreeFam" id="TF323974"/>
<dbReference type="Proteomes" id="UP000008144">
    <property type="component" value="Unassembled WGS sequence"/>
</dbReference>
<dbReference type="GO" id="GO:0042995">
    <property type="term" value="C:cell projection"/>
    <property type="evidence" value="ECO:0007669"/>
    <property type="project" value="UniProtKB-KW"/>
</dbReference>
<dbReference type="GO" id="GO:0005737">
    <property type="term" value="C:cytoplasm"/>
    <property type="evidence" value="ECO:0000318"/>
    <property type="project" value="GO_Central"/>
</dbReference>
<dbReference type="GO" id="GO:0030286">
    <property type="term" value="C:dynein complex"/>
    <property type="evidence" value="ECO:0007669"/>
    <property type="project" value="UniProtKB-KW"/>
</dbReference>
<dbReference type="GO" id="GO:0005874">
    <property type="term" value="C:microtubule"/>
    <property type="evidence" value="ECO:0007669"/>
    <property type="project" value="UniProtKB-KW"/>
</dbReference>
<dbReference type="GO" id="GO:0043014">
    <property type="term" value="F:alpha-tubulin binding"/>
    <property type="evidence" value="ECO:0000318"/>
    <property type="project" value="GO_Central"/>
</dbReference>
<dbReference type="GO" id="GO:0045504">
    <property type="term" value="F:dynein heavy chain binding"/>
    <property type="evidence" value="ECO:0000318"/>
    <property type="project" value="GO_Central"/>
</dbReference>
<dbReference type="GO" id="GO:0036158">
    <property type="term" value="P:outer dynein arm assembly"/>
    <property type="evidence" value="ECO:0000318"/>
    <property type="project" value="GO_Central"/>
</dbReference>
<dbReference type="FunFam" id="3.80.10.10:FF:000049">
    <property type="entry name" value="Dynein light chain 1"/>
    <property type="match status" value="1"/>
</dbReference>
<dbReference type="Gene3D" id="3.80.10.10">
    <property type="entry name" value="Ribonuclease Inhibitor"/>
    <property type="match status" value="1"/>
</dbReference>
<dbReference type="InterPro" id="IPR001611">
    <property type="entry name" value="Leu-rich_rpt"/>
</dbReference>
<dbReference type="InterPro" id="IPR025875">
    <property type="entry name" value="Leu-rich_rpt_4"/>
</dbReference>
<dbReference type="InterPro" id="IPR032675">
    <property type="entry name" value="LRR_dom_sf"/>
</dbReference>
<dbReference type="PANTHER" id="PTHR15454:SF73">
    <property type="entry name" value="DYNEIN AXONEMAL LIGHT CHAIN 1"/>
    <property type="match status" value="1"/>
</dbReference>
<dbReference type="PANTHER" id="PTHR15454">
    <property type="entry name" value="NISCHARIN RELATED"/>
    <property type="match status" value="1"/>
</dbReference>
<dbReference type="Pfam" id="PF12799">
    <property type="entry name" value="LRR_4"/>
    <property type="match status" value="1"/>
</dbReference>
<dbReference type="SMART" id="SM00365">
    <property type="entry name" value="LRR_SD22"/>
    <property type="match status" value="4"/>
</dbReference>
<dbReference type="SUPFAM" id="SSF52058">
    <property type="entry name" value="L domain-like"/>
    <property type="match status" value="1"/>
</dbReference>
<dbReference type="PROSITE" id="PS51450">
    <property type="entry name" value="LRR"/>
    <property type="match status" value="4"/>
</dbReference>
<comment type="function">
    <text evidence="1 2">Part of the multisubunit axonemal ATPase complexes that generate the force for cilia motility and govern beat frequency (By similarity). Component of the outer arm dynein (ODA). May be involved in a mechanosensory feedback mechanism controlling ODA activity based on external conformational cues by tethering the outer arm dynein heavy chain (DNAH5) to the microtubule within the axoneme (By similarity).</text>
</comment>
<comment type="subunit">
    <text evidence="1">Interacts with DNAH5, a outer arm dynein heavy chain. Interacts with tubulin located within the A-tubule of the outer doublets in a ATP-independent manner.</text>
</comment>
<comment type="subcellular location">
    <subcellularLocation>
        <location evidence="1">Cytoplasm</location>
        <location evidence="1">Cytoskeleton</location>
        <location evidence="1">Cilium axoneme</location>
    </subcellularLocation>
</comment>
<comment type="miscellaneous">
    <text evidence="2">Outer (ODAs) and inner (IDAs) dynein arms contain the molecular motors that generate the force to move cilia by ATP-dependent reactions. There are two mechanosensory systems that monitor and respond to the mechanical state (curvature) of the axoneme. One system involves the central pair microtubule complex and radial spokes and the second system involves the outer dynein arms.</text>
</comment>
<comment type="similarity">
    <text evidence="3">Belongs to the dynein light chain LC1-type family.</text>
</comment>
<proteinExistence type="evidence at transcript level"/>
<name>DNAL1_CIOIN</name>
<sequence length="190" mass="21406">MSKGTSIKEALSKWEEKNSEKAAEAKEVKLYQMLPPIEKMDASLSTLTVCEKLSLSTNCIEKIANLNGLKNLKILSLGRNNIKNLNGLEAVGDSLEELWISYNSIEKLKGIHVLKKLKVLLMSNNQVKDWGEFNKLQELPVLMELVFVGNPLEEKHSAEGDWQDRVTKSLKALKKLDGTPIIKNDEEEED</sequence>
<gene>
    <name type="primary">DNAL1</name>
    <name type="synonym">LRR-DLC</name>
</gene>
<organism>
    <name type="scientific">Ciona intestinalis</name>
    <name type="common">Transparent sea squirt</name>
    <name type="synonym">Ascidia intestinalis</name>
    <dbReference type="NCBI Taxonomy" id="7719"/>
    <lineage>
        <taxon>Eukaryota</taxon>
        <taxon>Metazoa</taxon>
        <taxon>Chordata</taxon>
        <taxon>Tunicata</taxon>
        <taxon>Ascidiacea</taxon>
        <taxon>Phlebobranchia</taxon>
        <taxon>Cionidae</taxon>
        <taxon>Ciona</taxon>
    </lineage>
</organism>
<protein>
    <recommendedName>
        <fullName>Dynein axonemal light chain 1</fullName>
    </recommendedName>
    <alternativeName>
        <fullName>Leucine-rich repeat dynein light chain</fullName>
    </alternativeName>
</protein>
<evidence type="ECO:0000250" key="1">
    <source>
        <dbReference type="UniProtKB" id="Q4LDG9"/>
    </source>
</evidence>
<evidence type="ECO:0000250" key="2">
    <source>
        <dbReference type="UniProtKB" id="Q9XHH2"/>
    </source>
</evidence>
<evidence type="ECO:0000305" key="3"/>
<keyword id="KW-0966">Cell projection</keyword>
<keyword id="KW-0963">Cytoplasm</keyword>
<keyword id="KW-0206">Cytoskeleton</keyword>
<keyword id="KW-0243">Dynein</keyword>
<keyword id="KW-0433">Leucine-rich repeat</keyword>
<keyword id="KW-0493">Microtubule</keyword>
<keyword id="KW-0505">Motor protein</keyword>
<keyword id="KW-1185">Reference proteome</keyword>
<keyword id="KW-0677">Repeat</keyword>